<reference key="1">
    <citation type="journal article" date="2012" name="BMC Microbiol.">
        <title>Genome sequence of Desulfitobacterium hafniense DCB-2, a Gram-positive anaerobe capable of dehalogenation and metal reduction.</title>
        <authorList>
            <person name="Kim S.H."/>
            <person name="Harzman C."/>
            <person name="Davis J.K."/>
            <person name="Hutcheson R."/>
            <person name="Broderick J.B."/>
            <person name="Marsh T.L."/>
            <person name="Tiedje J.M."/>
        </authorList>
    </citation>
    <scope>NUCLEOTIDE SEQUENCE [LARGE SCALE GENOMIC DNA]</scope>
    <source>
        <strain>DSM 10664 / DCB-2</strain>
    </source>
</reference>
<proteinExistence type="inferred from homology"/>
<dbReference type="EC" id="2.7.1.39" evidence="1"/>
<dbReference type="EMBL" id="CP001336">
    <property type="protein sequence ID" value="ACL20506.1"/>
    <property type="molecule type" value="Genomic_DNA"/>
</dbReference>
<dbReference type="RefSeq" id="WP_015944056.1">
    <property type="nucleotide sequence ID" value="NC_011830.1"/>
</dbReference>
<dbReference type="SMR" id="B8FU92"/>
<dbReference type="KEGG" id="dhd:Dhaf_2478"/>
<dbReference type="HOGENOM" id="CLU_041243_0_2_9"/>
<dbReference type="UniPathway" id="UPA00050">
    <property type="reaction ID" value="UER00064"/>
</dbReference>
<dbReference type="Proteomes" id="UP000007726">
    <property type="component" value="Chromosome"/>
</dbReference>
<dbReference type="GO" id="GO:0005737">
    <property type="term" value="C:cytoplasm"/>
    <property type="evidence" value="ECO:0007669"/>
    <property type="project" value="UniProtKB-SubCell"/>
</dbReference>
<dbReference type="GO" id="GO:0005524">
    <property type="term" value="F:ATP binding"/>
    <property type="evidence" value="ECO:0007669"/>
    <property type="project" value="UniProtKB-UniRule"/>
</dbReference>
<dbReference type="GO" id="GO:0004413">
    <property type="term" value="F:homoserine kinase activity"/>
    <property type="evidence" value="ECO:0007669"/>
    <property type="project" value="UniProtKB-UniRule"/>
</dbReference>
<dbReference type="GO" id="GO:0009088">
    <property type="term" value="P:threonine biosynthetic process"/>
    <property type="evidence" value="ECO:0007669"/>
    <property type="project" value="UniProtKB-UniRule"/>
</dbReference>
<dbReference type="Gene3D" id="3.30.230.10">
    <property type="match status" value="1"/>
</dbReference>
<dbReference type="Gene3D" id="3.30.70.890">
    <property type="entry name" value="GHMP kinase, C-terminal domain"/>
    <property type="match status" value="1"/>
</dbReference>
<dbReference type="HAMAP" id="MF_00384">
    <property type="entry name" value="Homoser_kinase"/>
    <property type="match status" value="1"/>
</dbReference>
<dbReference type="InterPro" id="IPR013750">
    <property type="entry name" value="GHMP_kinase_C_dom"/>
</dbReference>
<dbReference type="InterPro" id="IPR036554">
    <property type="entry name" value="GHMP_kinase_C_sf"/>
</dbReference>
<dbReference type="InterPro" id="IPR006204">
    <property type="entry name" value="GHMP_kinase_N_dom"/>
</dbReference>
<dbReference type="InterPro" id="IPR006203">
    <property type="entry name" value="GHMP_knse_ATP-bd_CS"/>
</dbReference>
<dbReference type="InterPro" id="IPR000870">
    <property type="entry name" value="Homoserine_kinase"/>
</dbReference>
<dbReference type="InterPro" id="IPR020568">
    <property type="entry name" value="Ribosomal_Su5_D2-typ_SF"/>
</dbReference>
<dbReference type="InterPro" id="IPR014721">
    <property type="entry name" value="Ribsml_uS5_D2-typ_fold_subgr"/>
</dbReference>
<dbReference type="NCBIfam" id="NF002288">
    <property type="entry name" value="PRK01212.1-4"/>
    <property type="match status" value="1"/>
</dbReference>
<dbReference type="NCBIfam" id="TIGR00191">
    <property type="entry name" value="thrB"/>
    <property type="match status" value="1"/>
</dbReference>
<dbReference type="PANTHER" id="PTHR20861:SF1">
    <property type="entry name" value="HOMOSERINE KINASE"/>
    <property type="match status" value="1"/>
</dbReference>
<dbReference type="PANTHER" id="PTHR20861">
    <property type="entry name" value="HOMOSERINE/4-DIPHOSPHOCYTIDYL-2-C-METHYL-D-ERYTHRITOL KINASE"/>
    <property type="match status" value="1"/>
</dbReference>
<dbReference type="Pfam" id="PF08544">
    <property type="entry name" value="GHMP_kinases_C"/>
    <property type="match status" value="1"/>
</dbReference>
<dbReference type="Pfam" id="PF00288">
    <property type="entry name" value="GHMP_kinases_N"/>
    <property type="match status" value="1"/>
</dbReference>
<dbReference type="PIRSF" id="PIRSF000676">
    <property type="entry name" value="Homoser_kin"/>
    <property type="match status" value="1"/>
</dbReference>
<dbReference type="PRINTS" id="PR00958">
    <property type="entry name" value="HOMSERKINASE"/>
</dbReference>
<dbReference type="SUPFAM" id="SSF55060">
    <property type="entry name" value="GHMP Kinase, C-terminal domain"/>
    <property type="match status" value="1"/>
</dbReference>
<dbReference type="SUPFAM" id="SSF54211">
    <property type="entry name" value="Ribosomal protein S5 domain 2-like"/>
    <property type="match status" value="1"/>
</dbReference>
<dbReference type="PROSITE" id="PS00627">
    <property type="entry name" value="GHMP_KINASES_ATP"/>
    <property type="match status" value="1"/>
</dbReference>
<keyword id="KW-0028">Amino-acid biosynthesis</keyword>
<keyword id="KW-0067">ATP-binding</keyword>
<keyword id="KW-0963">Cytoplasm</keyword>
<keyword id="KW-0418">Kinase</keyword>
<keyword id="KW-0547">Nucleotide-binding</keyword>
<keyword id="KW-0791">Threonine biosynthesis</keyword>
<keyword id="KW-0808">Transferase</keyword>
<name>KHSE_DESHD</name>
<feature type="chain" id="PRO_1000134248" description="Homoserine kinase">
    <location>
        <begin position="1"/>
        <end position="297"/>
    </location>
</feature>
<feature type="binding site" evidence="1">
    <location>
        <begin position="85"/>
        <end position="95"/>
    </location>
    <ligand>
        <name>ATP</name>
        <dbReference type="ChEBI" id="CHEBI:30616"/>
    </ligand>
</feature>
<comment type="function">
    <text evidence="1">Catalyzes the ATP-dependent phosphorylation of L-homoserine to L-homoserine phosphate.</text>
</comment>
<comment type="catalytic activity">
    <reaction evidence="1">
        <text>L-homoserine + ATP = O-phospho-L-homoserine + ADP + H(+)</text>
        <dbReference type="Rhea" id="RHEA:13985"/>
        <dbReference type="ChEBI" id="CHEBI:15378"/>
        <dbReference type="ChEBI" id="CHEBI:30616"/>
        <dbReference type="ChEBI" id="CHEBI:57476"/>
        <dbReference type="ChEBI" id="CHEBI:57590"/>
        <dbReference type="ChEBI" id="CHEBI:456216"/>
        <dbReference type="EC" id="2.7.1.39"/>
    </reaction>
</comment>
<comment type="pathway">
    <text evidence="1">Amino-acid biosynthesis; L-threonine biosynthesis; L-threonine from L-aspartate: step 4/5.</text>
</comment>
<comment type="subcellular location">
    <subcellularLocation>
        <location evidence="1">Cytoplasm</location>
    </subcellularLocation>
</comment>
<comment type="similarity">
    <text evidence="1">Belongs to the GHMP kinase family. Homoserine kinase subfamily.</text>
</comment>
<accession>B8FU92</accession>
<sequence>MVRVRIPATSANLGPGFDCLGMALSLYNVVQIEAADSFQIALKGDYTAGIPGDETNLVWQSMCNLWEAIGFEIPTVSLELENNIPPTRGMGSSSAAIVGGLVAANEYAGGVLSKQQILQIANRIEGHPDNVAPALLGGVTLAVTAEASVIARTVHSQPQFMALAIVPDFYLSTEKSRNVLPASISRADAVYNLSRTALLVEALIHENYELLKEGMQDRLHQNQRASLVPGLGETLQVALDSGAYGSALSGSGPTILALVSSHRAEQVSQAMVDSLAAHGLTAKAYLLSVDSEGAAVI</sequence>
<organism>
    <name type="scientific">Desulfitobacterium hafniense (strain DSM 10664 / DCB-2)</name>
    <dbReference type="NCBI Taxonomy" id="272564"/>
    <lineage>
        <taxon>Bacteria</taxon>
        <taxon>Bacillati</taxon>
        <taxon>Bacillota</taxon>
        <taxon>Clostridia</taxon>
        <taxon>Eubacteriales</taxon>
        <taxon>Desulfitobacteriaceae</taxon>
        <taxon>Desulfitobacterium</taxon>
    </lineage>
</organism>
<gene>
    <name evidence="1" type="primary">thrB</name>
    <name type="ordered locus">Dhaf_2478</name>
</gene>
<protein>
    <recommendedName>
        <fullName evidence="1">Homoserine kinase</fullName>
        <shortName evidence="1">HK</shortName>
        <shortName evidence="1">HSK</shortName>
        <ecNumber evidence="1">2.7.1.39</ecNumber>
    </recommendedName>
</protein>
<evidence type="ECO:0000255" key="1">
    <source>
        <dbReference type="HAMAP-Rule" id="MF_00384"/>
    </source>
</evidence>